<sequence length="877" mass="99886">MDGPNSDRAHDRHAFDRVAACKARIQHNTAELAERFRTGTPVADLIRERTAFIDHLLSEAWDRRIGRGATDVALVAVGGYGRGELLLHSDVDLLILLDEAAPSSRKQDLSDFLRLLWDIGLKPGHSVRSPAECAEAARTDQTIITNLLEGRLLVGSAALWEAVRSETAPERMWSSAAFFEAKMAEQRIRYSKYHNTAYNLEPNVKEGPGGLRDIQLIGWIIRRHSDARGLQDLVAHGWLTDAEYRELKEAQAFLWRIRFALHALTGRCEDRLLFDYQRELAGLFGYRGETSNEVVEGFMQDYFRTVTGVERLNELLLQLFNEAVLHRDDAFSPTPVNDHFQAVNDYLEAVHPAVFREHPLALLEVFLILQKNSALEGVRAATIRLIRQHIHLIDDAFRNDPEACRLFMDILRQPGGVTHQLRRMNRYGVLAAYLPEFGRVVGRMQYDLFHVYTVDEHTLFVVRNLRRFALEEFQQENPLCYELFQLIEKPELLYIAALMHDIAKGSDGDHSEVGERIAEEFCRRHRIGPRETLLVKWLVRHHLVMSMTAQRKDLSDPEVIHEFAQIVRNQNTLNHLYLLTVADIRATNPSLWNSWKGALLQELYTSTSWTLRRGLDTPPDYAEQISAAKDEARTLLQRFGLAEDAITAVWENIGDDYFLRFLPEEIAWHTTAIAACRPEHLPLVLLRPESLRGSVEVFIYERNRDFLFAQTTAVLDQLGLTVLDAKIIASRQGFALLSFNVLERSGTAPEGLFRLVQICDRLKEALSGGGAPPPAVSRLATRQIRHFTVPTKVFFHDDPQNRFSILELIATDRPGLLSKVGQAFMRTGIRLHNAKISTVGSRAEDIFFITDREDRPLDGEADRAALRRVLIEFVGDQ</sequence>
<proteinExistence type="inferred from homology"/>
<evidence type="ECO:0000255" key="1">
    <source>
        <dbReference type="HAMAP-Rule" id="MF_00277"/>
    </source>
</evidence>
<evidence type="ECO:0000255" key="2">
    <source>
        <dbReference type="PROSITE-ProRule" id="PRU01175"/>
    </source>
</evidence>
<comment type="function">
    <text evidence="1">Modifies, by uridylylation and deuridylylation, the PII regulatory proteins (GlnB and homologs), in response to the nitrogen status of the cell that GlnD senses through the glutamine level. Under low glutamine levels, catalyzes the conversion of the PII proteins and UTP to PII-UMP and PPi, while under higher glutamine levels, GlnD hydrolyzes PII-UMP to PII and UMP (deuridylylation). Thus, controls uridylylation state and activity of the PII proteins, and plays an important role in the regulation of nitrogen fixation and metabolism.</text>
</comment>
<comment type="catalytic activity">
    <reaction evidence="1">
        <text>[protein-PII]-L-tyrosine + UTP = [protein-PII]-uridylyl-L-tyrosine + diphosphate</text>
        <dbReference type="Rhea" id="RHEA:13673"/>
        <dbReference type="Rhea" id="RHEA-COMP:12147"/>
        <dbReference type="Rhea" id="RHEA-COMP:12148"/>
        <dbReference type="ChEBI" id="CHEBI:33019"/>
        <dbReference type="ChEBI" id="CHEBI:46398"/>
        <dbReference type="ChEBI" id="CHEBI:46858"/>
        <dbReference type="ChEBI" id="CHEBI:90602"/>
        <dbReference type="EC" id="2.7.7.59"/>
    </reaction>
</comment>
<comment type="catalytic activity">
    <reaction evidence="1">
        <text>[protein-PII]-uridylyl-L-tyrosine + H2O = [protein-PII]-L-tyrosine + UMP + H(+)</text>
        <dbReference type="Rhea" id="RHEA:48600"/>
        <dbReference type="Rhea" id="RHEA-COMP:12147"/>
        <dbReference type="Rhea" id="RHEA-COMP:12148"/>
        <dbReference type="ChEBI" id="CHEBI:15377"/>
        <dbReference type="ChEBI" id="CHEBI:15378"/>
        <dbReference type="ChEBI" id="CHEBI:46858"/>
        <dbReference type="ChEBI" id="CHEBI:57865"/>
        <dbReference type="ChEBI" id="CHEBI:90602"/>
    </reaction>
</comment>
<comment type="cofactor">
    <cofactor evidence="1">
        <name>Mg(2+)</name>
        <dbReference type="ChEBI" id="CHEBI:18420"/>
    </cofactor>
</comment>
<comment type="activity regulation">
    <text evidence="1">Uridylyltransferase (UTase) activity is inhibited by glutamine, while glutamine activates uridylyl-removing (UR) activity.</text>
</comment>
<comment type="domain">
    <text evidence="1">Has four distinct domains: an N-terminal nucleotidyltransferase (NT) domain responsible for UTase activity, a central HD domain that encodes UR activity, and two C-terminal ACT domains that seem to have a role in glutamine sensing.</text>
</comment>
<comment type="similarity">
    <text evidence="1">Belongs to the GlnD family.</text>
</comment>
<name>GLND_METCA</name>
<keyword id="KW-0378">Hydrolase</keyword>
<keyword id="KW-0460">Magnesium</keyword>
<keyword id="KW-0511">Multifunctional enzyme</keyword>
<keyword id="KW-0535">Nitrogen fixation</keyword>
<keyword id="KW-0548">Nucleotidyltransferase</keyword>
<keyword id="KW-1185">Reference proteome</keyword>
<keyword id="KW-0677">Repeat</keyword>
<keyword id="KW-0808">Transferase</keyword>
<gene>
    <name evidence="1" type="primary">glnD</name>
    <name type="ordered locus">MCA0565</name>
</gene>
<dbReference type="EC" id="2.7.7.59" evidence="1"/>
<dbReference type="EC" id="3.1.4.-" evidence="1"/>
<dbReference type="EMBL" id="AE017282">
    <property type="protein sequence ID" value="AAU93245.1"/>
    <property type="molecule type" value="Genomic_DNA"/>
</dbReference>
<dbReference type="RefSeq" id="WP_010959913.1">
    <property type="nucleotide sequence ID" value="NC_002977.6"/>
</dbReference>
<dbReference type="SMR" id="Q60BB2"/>
<dbReference type="STRING" id="243233.MCA0565"/>
<dbReference type="GeneID" id="88222897"/>
<dbReference type="KEGG" id="mca:MCA0565"/>
<dbReference type="eggNOG" id="COG2844">
    <property type="taxonomic scope" value="Bacteria"/>
</dbReference>
<dbReference type="HOGENOM" id="CLU_012833_0_0_6"/>
<dbReference type="Proteomes" id="UP000006821">
    <property type="component" value="Chromosome"/>
</dbReference>
<dbReference type="GO" id="GO:0008773">
    <property type="term" value="F:[protein-PII] uridylyltransferase activity"/>
    <property type="evidence" value="ECO:0007669"/>
    <property type="project" value="UniProtKB-UniRule"/>
</dbReference>
<dbReference type="GO" id="GO:0008081">
    <property type="term" value="F:phosphoric diester hydrolase activity"/>
    <property type="evidence" value="ECO:0007669"/>
    <property type="project" value="UniProtKB-UniRule"/>
</dbReference>
<dbReference type="GO" id="GO:0009399">
    <property type="term" value="P:nitrogen fixation"/>
    <property type="evidence" value="ECO:0007669"/>
    <property type="project" value="UniProtKB-UniRule"/>
</dbReference>
<dbReference type="GO" id="GO:0006808">
    <property type="term" value="P:regulation of nitrogen utilization"/>
    <property type="evidence" value="ECO:0007669"/>
    <property type="project" value="UniProtKB-UniRule"/>
</dbReference>
<dbReference type="CDD" id="cd04899">
    <property type="entry name" value="ACT_ACR-UUR-like_2"/>
    <property type="match status" value="1"/>
</dbReference>
<dbReference type="CDD" id="cd04900">
    <property type="entry name" value="ACT_UUR-like_1"/>
    <property type="match status" value="1"/>
</dbReference>
<dbReference type="CDD" id="cd00077">
    <property type="entry name" value="HDc"/>
    <property type="match status" value="1"/>
</dbReference>
<dbReference type="CDD" id="cd05401">
    <property type="entry name" value="NT_GlnE_GlnD_like"/>
    <property type="match status" value="1"/>
</dbReference>
<dbReference type="FunFam" id="1.10.3090.10:FF:000005">
    <property type="entry name" value="Bifunctional uridylyltransferase/uridylyl-removing enzyme"/>
    <property type="match status" value="1"/>
</dbReference>
<dbReference type="FunFam" id="1.20.120.330:FF:000031">
    <property type="entry name" value="Bifunctional uridylyltransferase/uridylyl-removing enzyme"/>
    <property type="match status" value="1"/>
</dbReference>
<dbReference type="Gene3D" id="1.10.3090.10">
    <property type="entry name" value="cca-adding enzyme, domain 2"/>
    <property type="match status" value="1"/>
</dbReference>
<dbReference type="Gene3D" id="1.20.120.330">
    <property type="entry name" value="Nucleotidyltransferases domain 2"/>
    <property type="match status" value="1"/>
</dbReference>
<dbReference type="HAMAP" id="MF_00277">
    <property type="entry name" value="PII_uridylyl_transf"/>
    <property type="match status" value="1"/>
</dbReference>
<dbReference type="InterPro" id="IPR045865">
    <property type="entry name" value="ACT-like_dom_sf"/>
</dbReference>
<dbReference type="InterPro" id="IPR002912">
    <property type="entry name" value="ACT_dom"/>
</dbReference>
<dbReference type="InterPro" id="IPR003607">
    <property type="entry name" value="HD/PDEase_dom"/>
</dbReference>
<dbReference type="InterPro" id="IPR006674">
    <property type="entry name" value="HD_domain"/>
</dbReference>
<dbReference type="InterPro" id="IPR043519">
    <property type="entry name" value="NT_sf"/>
</dbReference>
<dbReference type="InterPro" id="IPR013546">
    <property type="entry name" value="PII_UdlTrfase/GS_AdlTrfase"/>
</dbReference>
<dbReference type="InterPro" id="IPR002934">
    <property type="entry name" value="Polymerase_NTP_transf_dom"/>
</dbReference>
<dbReference type="InterPro" id="IPR010043">
    <property type="entry name" value="UTase/UR"/>
</dbReference>
<dbReference type="NCBIfam" id="TIGR01693">
    <property type="entry name" value="UTase_glnD"/>
    <property type="match status" value="1"/>
</dbReference>
<dbReference type="PANTHER" id="PTHR47320">
    <property type="entry name" value="BIFUNCTIONAL URIDYLYLTRANSFERASE/URIDYLYL-REMOVING ENZYME"/>
    <property type="match status" value="1"/>
</dbReference>
<dbReference type="PANTHER" id="PTHR47320:SF1">
    <property type="entry name" value="BIFUNCTIONAL URIDYLYLTRANSFERASE_URIDYLYL-REMOVING ENZYME"/>
    <property type="match status" value="1"/>
</dbReference>
<dbReference type="Pfam" id="PF01842">
    <property type="entry name" value="ACT"/>
    <property type="match status" value="1"/>
</dbReference>
<dbReference type="Pfam" id="PF08335">
    <property type="entry name" value="GlnD_UR_UTase"/>
    <property type="match status" value="1"/>
</dbReference>
<dbReference type="Pfam" id="PF01966">
    <property type="entry name" value="HD"/>
    <property type="match status" value="1"/>
</dbReference>
<dbReference type="Pfam" id="PF01909">
    <property type="entry name" value="NTP_transf_2"/>
    <property type="match status" value="1"/>
</dbReference>
<dbReference type="PIRSF" id="PIRSF006288">
    <property type="entry name" value="PII_uridyltransf"/>
    <property type="match status" value="1"/>
</dbReference>
<dbReference type="SMART" id="SM00471">
    <property type="entry name" value="HDc"/>
    <property type="match status" value="1"/>
</dbReference>
<dbReference type="SUPFAM" id="SSF55021">
    <property type="entry name" value="ACT-like"/>
    <property type="match status" value="1"/>
</dbReference>
<dbReference type="SUPFAM" id="SSF109604">
    <property type="entry name" value="HD-domain/PDEase-like"/>
    <property type="match status" value="1"/>
</dbReference>
<dbReference type="SUPFAM" id="SSF81301">
    <property type="entry name" value="Nucleotidyltransferase"/>
    <property type="match status" value="1"/>
</dbReference>
<dbReference type="SUPFAM" id="SSF81593">
    <property type="entry name" value="Nucleotidyltransferase substrate binding subunit/domain"/>
    <property type="match status" value="1"/>
</dbReference>
<dbReference type="PROSITE" id="PS51671">
    <property type="entry name" value="ACT"/>
    <property type="match status" value="2"/>
</dbReference>
<dbReference type="PROSITE" id="PS51831">
    <property type="entry name" value="HD"/>
    <property type="match status" value="1"/>
</dbReference>
<feature type="chain" id="PRO_0000192744" description="Bifunctional uridylyltransferase/uridylyl-removing enzyme">
    <location>
        <begin position="1"/>
        <end position="877"/>
    </location>
</feature>
<feature type="domain" description="HD" evidence="2">
    <location>
        <begin position="454"/>
        <end position="576"/>
    </location>
</feature>
<feature type="domain" description="ACT 1" evidence="1">
    <location>
        <begin position="696"/>
        <end position="778"/>
    </location>
</feature>
<feature type="domain" description="ACT 2" evidence="1">
    <location>
        <begin position="805"/>
        <end position="877"/>
    </location>
</feature>
<feature type="region of interest" description="Uridylyltransferase">
    <location>
        <begin position="1"/>
        <end position="335"/>
    </location>
</feature>
<feature type="region of interest" description="Uridylyl-removing">
    <location>
        <begin position="336"/>
        <end position="695"/>
    </location>
</feature>
<reference key="1">
    <citation type="journal article" date="2004" name="PLoS Biol.">
        <title>Genomic insights into methanotrophy: the complete genome sequence of Methylococcus capsulatus (Bath).</title>
        <authorList>
            <person name="Ward N.L."/>
            <person name="Larsen O."/>
            <person name="Sakwa J."/>
            <person name="Bruseth L."/>
            <person name="Khouri H.M."/>
            <person name="Durkin A.S."/>
            <person name="Dimitrov G."/>
            <person name="Jiang L."/>
            <person name="Scanlan D."/>
            <person name="Kang K.H."/>
            <person name="Lewis M.R."/>
            <person name="Nelson K.E."/>
            <person name="Methe B.A."/>
            <person name="Wu M."/>
            <person name="Heidelberg J.F."/>
            <person name="Paulsen I.T."/>
            <person name="Fouts D.E."/>
            <person name="Ravel J."/>
            <person name="Tettelin H."/>
            <person name="Ren Q."/>
            <person name="Read T.D."/>
            <person name="DeBoy R.T."/>
            <person name="Seshadri R."/>
            <person name="Salzberg S.L."/>
            <person name="Jensen H.B."/>
            <person name="Birkeland N.K."/>
            <person name="Nelson W.C."/>
            <person name="Dodson R.J."/>
            <person name="Grindhaug S.H."/>
            <person name="Holt I.E."/>
            <person name="Eidhammer I."/>
            <person name="Jonasen I."/>
            <person name="Vanaken S."/>
            <person name="Utterback T.R."/>
            <person name="Feldblyum T.V."/>
            <person name="Fraser C.M."/>
            <person name="Lillehaug J.R."/>
            <person name="Eisen J.A."/>
        </authorList>
    </citation>
    <scope>NUCLEOTIDE SEQUENCE [LARGE SCALE GENOMIC DNA]</scope>
    <source>
        <strain>ATCC 33009 / NCIMB 11132 / Bath</strain>
    </source>
</reference>
<protein>
    <recommendedName>
        <fullName evidence="1">Bifunctional uridylyltransferase/uridylyl-removing enzyme</fullName>
        <shortName evidence="1">UTase/UR</shortName>
    </recommendedName>
    <alternativeName>
        <fullName evidence="1">Bifunctional [protein-PII] modification enzyme</fullName>
    </alternativeName>
    <alternativeName>
        <fullName evidence="1">Bifunctional nitrogen sensor protein</fullName>
    </alternativeName>
    <domain>
        <recommendedName>
            <fullName evidence="1">[Protein-PII] uridylyltransferase</fullName>
            <shortName evidence="1">PII uridylyltransferase</shortName>
            <shortName evidence="1">UTase</shortName>
            <ecNumber evidence="1">2.7.7.59</ecNumber>
        </recommendedName>
    </domain>
    <domain>
        <recommendedName>
            <fullName evidence="1">[Protein-PII]-UMP uridylyl-removing enzyme</fullName>
            <shortName evidence="1">UR</shortName>
            <ecNumber evidence="1">3.1.4.-</ecNumber>
        </recommendedName>
    </domain>
</protein>
<accession>Q60BB2</accession>
<organism>
    <name type="scientific">Methylococcus capsulatus (strain ATCC 33009 / NCIMB 11132 / Bath)</name>
    <dbReference type="NCBI Taxonomy" id="243233"/>
    <lineage>
        <taxon>Bacteria</taxon>
        <taxon>Pseudomonadati</taxon>
        <taxon>Pseudomonadota</taxon>
        <taxon>Gammaproteobacteria</taxon>
        <taxon>Methylococcales</taxon>
        <taxon>Methylococcaceae</taxon>
        <taxon>Methylococcus</taxon>
    </lineage>
</organism>